<name>ATPG_RHIR8</name>
<feature type="chain" id="PRO_1000148593" description="ATP synthase gamma chain">
    <location>
        <begin position="1"/>
        <end position="294"/>
    </location>
</feature>
<gene>
    <name evidence="1" type="primary">atpG</name>
    <name type="ordered locus">Arad_4307</name>
</gene>
<dbReference type="EMBL" id="CP000628">
    <property type="protein sequence ID" value="ACM28042.1"/>
    <property type="molecule type" value="Genomic_DNA"/>
</dbReference>
<dbReference type="RefSeq" id="WP_012652648.1">
    <property type="nucleotide sequence ID" value="NC_011985.1"/>
</dbReference>
<dbReference type="SMR" id="B9JBZ6"/>
<dbReference type="STRING" id="311403.Arad_4307"/>
<dbReference type="KEGG" id="ara:Arad_4307"/>
<dbReference type="eggNOG" id="COG0224">
    <property type="taxonomic scope" value="Bacteria"/>
</dbReference>
<dbReference type="HOGENOM" id="CLU_050669_0_1_5"/>
<dbReference type="Proteomes" id="UP000001600">
    <property type="component" value="Chromosome 1"/>
</dbReference>
<dbReference type="GO" id="GO:0005886">
    <property type="term" value="C:plasma membrane"/>
    <property type="evidence" value="ECO:0007669"/>
    <property type="project" value="UniProtKB-SubCell"/>
</dbReference>
<dbReference type="GO" id="GO:0045259">
    <property type="term" value="C:proton-transporting ATP synthase complex"/>
    <property type="evidence" value="ECO:0007669"/>
    <property type="project" value="UniProtKB-KW"/>
</dbReference>
<dbReference type="GO" id="GO:0005524">
    <property type="term" value="F:ATP binding"/>
    <property type="evidence" value="ECO:0007669"/>
    <property type="project" value="UniProtKB-UniRule"/>
</dbReference>
<dbReference type="GO" id="GO:0046933">
    <property type="term" value="F:proton-transporting ATP synthase activity, rotational mechanism"/>
    <property type="evidence" value="ECO:0007669"/>
    <property type="project" value="UniProtKB-UniRule"/>
</dbReference>
<dbReference type="GO" id="GO:0042777">
    <property type="term" value="P:proton motive force-driven plasma membrane ATP synthesis"/>
    <property type="evidence" value="ECO:0007669"/>
    <property type="project" value="UniProtKB-UniRule"/>
</dbReference>
<dbReference type="CDD" id="cd12151">
    <property type="entry name" value="F1-ATPase_gamma"/>
    <property type="match status" value="1"/>
</dbReference>
<dbReference type="FunFam" id="1.10.287.80:FF:000001">
    <property type="entry name" value="ATP synthase gamma chain"/>
    <property type="match status" value="1"/>
</dbReference>
<dbReference type="FunFam" id="1.10.287.80:FF:000003">
    <property type="entry name" value="ATP synthase gamma chain, chloroplastic"/>
    <property type="match status" value="1"/>
</dbReference>
<dbReference type="Gene3D" id="3.40.1380.10">
    <property type="match status" value="1"/>
</dbReference>
<dbReference type="Gene3D" id="1.10.287.80">
    <property type="entry name" value="ATP synthase, gamma subunit, helix hairpin domain"/>
    <property type="match status" value="1"/>
</dbReference>
<dbReference type="HAMAP" id="MF_00815">
    <property type="entry name" value="ATP_synth_gamma_bact"/>
    <property type="match status" value="1"/>
</dbReference>
<dbReference type="InterPro" id="IPR035968">
    <property type="entry name" value="ATP_synth_F1_ATPase_gsu"/>
</dbReference>
<dbReference type="InterPro" id="IPR000131">
    <property type="entry name" value="ATP_synth_F1_gsu"/>
</dbReference>
<dbReference type="InterPro" id="IPR023632">
    <property type="entry name" value="ATP_synth_F1_gsu_CS"/>
</dbReference>
<dbReference type="NCBIfam" id="TIGR01146">
    <property type="entry name" value="ATPsyn_F1gamma"/>
    <property type="match status" value="1"/>
</dbReference>
<dbReference type="NCBIfam" id="NF004146">
    <property type="entry name" value="PRK05621.1-4"/>
    <property type="match status" value="1"/>
</dbReference>
<dbReference type="PANTHER" id="PTHR11693">
    <property type="entry name" value="ATP SYNTHASE GAMMA CHAIN"/>
    <property type="match status" value="1"/>
</dbReference>
<dbReference type="PANTHER" id="PTHR11693:SF22">
    <property type="entry name" value="ATP SYNTHASE SUBUNIT GAMMA, MITOCHONDRIAL"/>
    <property type="match status" value="1"/>
</dbReference>
<dbReference type="Pfam" id="PF00231">
    <property type="entry name" value="ATP-synt"/>
    <property type="match status" value="1"/>
</dbReference>
<dbReference type="PIRSF" id="PIRSF039089">
    <property type="entry name" value="ATP_synthase_gamma"/>
    <property type="match status" value="1"/>
</dbReference>
<dbReference type="PRINTS" id="PR00126">
    <property type="entry name" value="ATPASEGAMMA"/>
</dbReference>
<dbReference type="SUPFAM" id="SSF52943">
    <property type="entry name" value="ATP synthase (F1-ATPase), gamma subunit"/>
    <property type="match status" value="1"/>
</dbReference>
<dbReference type="PROSITE" id="PS00153">
    <property type="entry name" value="ATPASE_GAMMA"/>
    <property type="match status" value="1"/>
</dbReference>
<accession>B9JBZ6</accession>
<proteinExistence type="inferred from homology"/>
<evidence type="ECO:0000255" key="1">
    <source>
        <dbReference type="HAMAP-Rule" id="MF_00815"/>
    </source>
</evidence>
<protein>
    <recommendedName>
        <fullName evidence="1">ATP synthase gamma chain</fullName>
    </recommendedName>
    <alternativeName>
        <fullName evidence="1">ATP synthase F1 sector gamma subunit</fullName>
    </alternativeName>
    <alternativeName>
        <fullName evidence="1">F-ATPase gamma subunit</fullName>
    </alternativeName>
</protein>
<sequence length="294" mass="32034">MPSLKDLKNRIASVKATQKITKAMKMVAAAKLRRAQEAAEAARPYSQRMGAVLANITAAVSDADGAPLLMTGTGKSDVHLLVVCTAERGLCGGFNSQIARFARDHVRKLLAEGKTVKIFTVGKKGYDILRREYASLIIERKELRDVKRVGFENADALGKRIIEMFEAGEFDVCTLFYSEFKSVISQVPTGLQLIPASAPAVVEEDAAHKGAVYEYEPDAASILADLIPRNISVQIFRALLENVAGEMGSKMSAMDNATRNAGEMINKLTLSYNRQRQAQITKELIEIISGAEAL</sequence>
<organism>
    <name type="scientific">Rhizobium rhizogenes (strain K84 / ATCC BAA-868)</name>
    <name type="common">Agrobacterium radiobacter</name>
    <dbReference type="NCBI Taxonomy" id="311403"/>
    <lineage>
        <taxon>Bacteria</taxon>
        <taxon>Pseudomonadati</taxon>
        <taxon>Pseudomonadota</taxon>
        <taxon>Alphaproteobacteria</taxon>
        <taxon>Hyphomicrobiales</taxon>
        <taxon>Rhizobiaceae</taxon>
        <taxon>Rhizobium/Agrobacterium group</taxon>
        <taxon>Rhizobium</taxon>
    </lineage>
</organism>
<reference key="1">
    <citation type="journal article" date="2009" name="J. Bacteriol.">
        <title>Genome sequences of three Agrobacterium biovars help elucidate the evolution of multichromosome genomes in bacteria.</title>
        <authorList>
            <person name="Slater S.C."/>
            <person name="Goldman B.S."/>
            <person name="Goodner B."/>
            <person name="Setubal J.C."/>
            <person name="Farrand S.K."/>
            <person name="Nester E.W."/>
            <person name="Burr T.J."/>
            <person name="Banta L."/>
            <person name="Dickerman A.W."/>
            <person name="Paulsen I."/>
            <person name="Otten L."/>
            <person name="Suen G."/>
            <person name="Welch R."/>
            <person name="Almeida N.F."/>
            <person name="Arnold F."/>
            <person name="Burton O.T."/>
            <person name="Du Z."/>
            <person name="Ewing A."/>
            <person name="Godsy E."/>
            <person name="Heisel S."/>
            <person name="Houmiel K.L."/>
            <person name="Jhaveri J."/>
            <person name="Lu J."/>
            <person name="Miller N.M."/>
            <person name="Norton S."/>
            <person name="Chen Q."/>
            <person name="Phoolcharoen W."/>
            <person name="Ohlin V."/>
            <person name="Ondrusek D."/>
            <person name="Pride N."/>
            <person name="Stricklin S.L."/>
            <person name="Sun J."/>
            <person name="Wheeler C."/>
            <person name="Wilson L."/>
            <person name="Zhu H."/>
            <person name="Wood D.W."/>
        </authorList>
    </citation>
    <scope>NUCLEOTIDE SEQUENCE [LARGE SCALE GENOMIC DNA]</scope>
    <source>
        <strain>K84 / ATCC BAA-868</strain>
    </source>
</reference>
<comment type="function">
    <text evidence="1">Produces ATP from ADP in the presence of a proton gradient across the membrane. The gamma chain is believed to be important in regulating ATPase activity and the flow of protons through the CF(0) complex.</text>
</comment>
<comment type="subunit">
    <text evidence="1">F-type ATPases have 2 components, CF(1) - the catalytic core - and CF(0) - the membrane proton channel. CF(1) has five subunits: alpha(3), beta(3), gamma(1), delta(1), epsilon(1). CF(0) has three main subunits: a, b and c.</text>
</comment>
<comment type="subcellular location">
    <subcellularLocation>
        <location evidence="1">Cell inner membrane</location>
        <topology evidence="1">Peripheral membrane protein</topology>
    </subcellularLocation>
</comment>
<comment type="similarity">
    <text evidence="1">Belongs to the ATPase gamma chain family.</text>
</comment>
<keyword id="KW-0066">ATP synthesis</keyword>
<keyword id="KW-0997">Cell inner membrane</keyword>
<keyword id="KW-1003">Cell membrane</keyword>
<keyword id="KW-0139">CF(1)</keyword>
<keyword id="KW-0375">Hydrogen ion transport</keyword>
<keyword id="KW-0406">Ion transport</keyword>
<keyword id="KW-0472">Membrane</keyword>
<keyword id="KW-0813">Transport</keyword>